<dbReference type="EC" id="2.4.2.18" evidence="1"/>
<dbReference type="EMBL" id="CP000084">
    <property type="protein sequence ID" value="AAZ21736.1"/>
    <property type="molecule type" value="Genomic_DNA"/>
</dbReference>
<dbReference type="RefSeq" id="WP_011282041.1">
    <property type="nucleotide sequence ID" value="NC_007205.1"/>
</dbReference>
<dbReference type="SMR" id="Q4FM53"/>
<dbReference type="STRING" id="335992.SAR11_0923"/>
<dbReference type="GeneID" id="66295416"/>
<dbReference type="KEGG" id="pub:SAR11_0923"/>
<dbReference type="eggNOG" id="COG0547">
    <property type="taxonomic scope" value="Bacteria"/>
</dbReference>
<dbReference type="HOGENOM" id="CLU_034315_4_0_5"/>
<dbReference type="OrthoDB" id="9806430at2"/>
<dbReference type="UniPathway" id="UPA00035">
    <property type="reaction ID" value="UER00041"/>
</dbReference>
<dbReference type="Proteomes" id="UP000002528">
    <property type="component" value="Chromosome"/>
</dbReference>
<dbReference type="GO" id="GO:0005829">
    <property type="term" value="C:cytosol"/>
    <property type="evidence" value="ECO:0007669"/>
    <property type="project" value="TreeGrafter"/>
</dbReference>
<dbReference type="GO" id="GO:0004048">
    <property type="term" value="F:anthranilate phosphoribosyltransferase activity"/>
    <property type="evidence" value="ECO:0007669"/>
    <property type="project" value="UniProtKB-UniRule"/>
</dbReference>
<dbReference type="GO" id="GO:0000287">
    <property type="term" value="F:magnesium ion binding"/>
    <property type="evidence" value="ECO:0007669"/>
    <property type="project" value="UniProtKB-UniRule"/>
</dbReference>
<dbReference type="GO" id="GO:0000162">
    <property type="term" value="P:L-tryptophan biosynthetic process"/>
    <property type="evidence" value="ECO:0007669"/>
    <property type="project" value="UniProtKB-UniRule"/>
</dbReference>
<dbReference type="FunFam" id="3.40.1030.10:FF:000002">
    <property type="entry name" value="Anthranilate phosphoribosyltransferase"/>
    <property type="match status" value="1"/>
</dbReference>
<dbReference type="Gene3D" id="3.40.1030.10">
    <property type="entry name" value="Nucleoside phosphorylase/phosphoribosyltransferase catalytic domain"/>
    <property type="match status" value="1"/>
</dbReference>
<dbReference type="Gene3D" id="1.20.970.10">
    <property type="entry name" value="Transferase, Pyrimidine Nucleoside Phosphorylase, Chain C"/>
    <property type="match status" value="1"/>
</dbReference>
<dbReference type="HAMAP" id="MF_00211">
    <property type="entry name" value="TrpD"/>
    <property type="match status" value="1"/>
</dbReference>
<dbReference type="InterPro" id="IPR005940">
    <property type="entry name" value="Anthranilate_Pribosyl_Tfrase"/>
</dbReference>
<dbReference type="InterPro" id="IPR000312">
    <property type="entry name" value="Glycosyl_Trfase_fam3"/>
</dbReference>
<dbReference type="InterPro" id="IPR017459">
    <property type="entry name" value="Glycosyl_Trfase_fam3_N_dom"/>
</dbReference>
<dbReference type="InterPro" id="IPR036320">
    <property type="entry name" value="Glycosyl_Trfase_fam3_N_dom_sf"/>
</dbReference>
<dbReference type="InterPro" id="IPR035902">
    <property type="entry name" value="Nuc_phospho_transferase"/>
</dbReference>
<dbReference type="NCBIfam" id="TIGR01245">
    <property type="entry name" value="trpD"/>
    <property type="match status" value="1"/>
</dbReference>
<dbReference type="PANTHER" id="PTHR43285">
    <property type="entry name" value="ANTHRANILATE PHOSPHORIBOSYLTRANSFERASE"/>
    <property type="match status" value="1"/>
</dbReference>
<dbReference type="PANTHER" id="PTHR43285:SF2">
    <property type="entry name" value="ANTHRANILATE PHOSPHORIBOSYLTRANSFERASE"/>
    <property type="match status" value="1"/>
</dbReference>
<dbReference type="Pfam" id="PF02885">
    <property type="entry name" value="Glycos_trans_3N"/>
    <property type="match status" value="1"/>
</dbReference>
<dbReference type="Pfam" id="PF00591">
    <property type="entry name" value="Glycos_transf_3"/>
    <property type="match status" value="1"/>
</dbReference>
<dbReference type="SUPFAM" id="SSF52418">
    <property type="entry name" value="Nucleoside phosphorylase/phosphoribosyltransferase catalytic domain"/>
    <property type="match status" value="1"/>
</dbReference>
<dbReference type="SUPFAM" id="SSF47648">
    <property type="entry name" value="Nucleoside phosphorylase/phosphoribosyltransferase N-terminal domain"/>
    <property type="match status" value="1"/>
</dbReference>
<sequence>MRVFIDKLKDKQDLSFAESKNAFEILMNGKASDDEIFDFLTLLSSKGESSDEIAGGVFVLRDKSKRVNVDDCIDTCGTGGDGMNTLNISTASALLLSSMGIKVAKHGNKAVSSKCGSGDVLEALNIKIDLEPKDIEEQIKKNNFGFMFAPNYHSAMRFVGPTRKKIGKRTIFNMIGPLSSPALVDRQVIGVFDKKLLKIFANALNNLDIKFAWIVNSEDGLDEISPYSKTNVVQLKDGKISEMLIDPIKLNIGANKFENLLGDDAKFNANKMLDIFKGEDNDFSKAVCLNAAAGLIVSEKYTIFIDAYNEARTHILSGKTYNDLKEIQNV</sequence>
<protein>
    <recommendedName>
        <fullName evidence="1">Anthranilate phosphoribosyltransferase</fullName>
        <ecNumber evidence="1">2.4.2.18</ecNumber>
    </recommendedName>
</protein>
<proteinExistence type="inferred from homology"/>
<gene>
    <name evidence="1" type="primary">trpD</name>
    <name type="ordered locus">SAR11_0923</name>
</gene>
<name>TRPD_PELUB</name>
<reference key="1">
    <citation type="journal article" date="2005" name="Science">
        <title>Genome streamlining in a cosmopolitan oceanic bacterium.</title>
        <authorList>
            <person name="Giovannoni S.J."/>
            <person name="Tripp H.J."/>
            <person name="Givan S."/>
            <person name="Podar M."/>
            <person name="Vergin K.L."/>
            <person name="Baptista D."/>
            <person name="Bibbs L."/>
            <person name="Eads J."/>
            <person name="Richardson T.H."/>
            <person name="Noordewier M."/>
            <person name="Rappe M.S."/>
            <person name="Short J.M."/>
            <person name="Carrington J.C."/>
            <person name="Mathur E.J."/>
        </authorList>
    </citation>
    <scope>NUCLEOTIDE SEQUENCE [LARGE SCALE GENOMIC DNA]</scope>
    <source>
        <strain>HTCC1062</strain>
    </source>
</reference>
<feature type="chain" id="PRO_1000099828" description="Anthranilate phosphoribosyltransferase">
    <location>
        <begin position="1"/>
        <end position="330"/>
    </location>
</feature>
<feature type="binding site" evidence="1">
    <location>
        <position position="77"/>
    </location>
    <ligand>
        <name>5-phospho-alpha-D-ribose 1-diphosphate</name>
        <dbReference type="ChEBI" id="CHEBI:58017"/>
    </ligand>
</feature>
<feature type="binding site" evidence="1">
    <location>
        <position position="77"/>
    </location>
    <ligand>
        <name>anthranilate</name>
        <dbReference type="ChEBI" id="CHEBI:16567"/>
        <label>1</label>
    </ligand>
</feature>
<feature type="binding site" evidence="1">
    <location>
        <begin position="80"/>
        <end position="81"/>
    </location>
    <ligand>
        <name>5-phospho-alpha-D-ribose 1-diphosphate</name>
        <dbReference type="ChEBI" id="CHEBI:58017"/>
    </ligand>
</feature>
<feature type="binding site" evidence="1">
    <location>
        <position position="85"/>
    </location>
    <ligand>
        <name>5-phospho-alpha-D-ribose 1-diphosphate</name>
        <dbReference type="ChEBI" id="CHEBI:58017"/>
    </ligand>
</feature>
<feature type="binding site" evidence="1">
    <location>
        <begin position="87"/>
        <end position="90"/>
    </location>
    <ligand>
        <name>5-phospho-alpha-D-ribose 1-diphosphate</name>
        <dbReference type="ChEBI" id="CHEBI:58017"/>
    </ligand>
</feature>
<feature type="binding site" evidence="1">
    <location>
        <position position="89"/>
    </location>
    <ligand>
        <name>Mg(2+)</name>
        <dbReference type="ChEBI" id="CHEBI:18420"/>
        <label>1</label>
    </ligand>
</feature>
<feature type="binding site" evidence="1">
    <location>
        <begin position="105"/>
        <end position="113"/>
    </location>
    <ligand>
        <name>5-phospho-alpha-D-ribose 1-diphosphate</name>
        <dbReference type="ChEBI" id="CHEBI:58017"/>
    </ligand>
</feature>
<feature type="binding site" evidence="1">
    <location>
        <position position="108"/>
    </location>
    <ligand>
        <name>anthranilate</name>
        <dbReference type="ChEBI" id="CHEBI:16567"/>
        <label>1</label>
    </ligand>
</feature>
<feature type="binding site" evidence="1">
    <location>
        <position position="117"/>
    </location>
    <ligand>
        <name>5-phospho-alpha-D-ribose 1-diphosphate</name>
        <dbReference type="ChEBI" id="CHEBI:58017"/>
    </ligand>
</feature>
<feature type="binding site" evidence="1">
    <location>
        <position position="163"/>
    </location>
    <ligand>
        <name>anthranilate</name>
        <dbReference type="ChEBI" id="CHEBI:16567"/>
        <label>2</label>
    </ligand>
</feature>
<feature type="binding site" evidence="1">
    <location>
        <position position="222"/>
    </location>
    <ligand>
        <name>Mg(2+)</name>
        <dbReference type="ChEBI" id="CHEBI:18420"/>
        <label>2</label>
    </ligand>
</feature>
<feature type="binding site" evidence="1">
    <location>
        <position position="223"/>
    </location>
    <ligand>
        <name>Mg(2+)</name>
        <dbReference type="ChEBI" id="CHEBI:18420"/>
        <label>1</label>
    </ligand>
</feature>
<feature type="binding site" evidence="1">
    <location>
        <position position="223"/>
    </location>
    <ligand>
        <name>Mg(2+)</name>
        <dbReference type="ChEBI" id="CHEBI:18420"/>
        <label>2</label>
    </ligand>
</feature>
<keyword id="KW-0028">Amino-acid biosynthesis</keyword>
<keyword id="KW-0057">Aromatic amino acid biosynthesis</keyword>
<keyword id="KW-0328">Glycosyltransferase</keyword>
<keyword id="KW-0460">Magnesium</keyword>
<keyword id="KW-0479">Metal-binding</keyword>
<keyword id="KW-1185">Reference proteome</keyword>
<keyword id="KW-0808">Transferase</keyword>
<keyword id="KW-0822">Tryptophan biosynthesis</keyword>
<evidence type="ECO:0000255" key="1">
    <source>
        <dbReference type="HAMAP-Rule" id="MF_00211"/>
    </source>
</evidence>
<comment type="function">
    <text evidence="1">Catalyzes the transfer of the phosphoribosyl group of 5-phosphorylribose-1-pyrophosphate (PRPP) to anthranilate to yield N-(5'-phosphoribosyl)-anthranilate (PRA).</text>
</comment>
<comment type="catalytic activity">
    <reaction evidence="1">
        <text>N-(5-phospho-beta-D-ribosyl)anthranilate + diphosphate = 5-phospho-alpha-D-ribose 1-diphosphate + anthranilate</text>
        <dbReference type="Rhea" id="RHEA:11768"/>
        <dbReference type="ChEBI" id="CHEBI:16567"/>
        <dbReference type="ChEBI" id="CHEBI:18277"/>
        <dbReference type="ChEBI" id="CHEBI:33019"/>
        <dbReference type="ChEBI" id="CHEBI:58017"/>
        <dbReference type="EC" id="2.4.2.18"/>
    </reaction>
</comment>
<comment type="cofactor">
    <cofactor evidence="1">
        <name>Mg(2+)</name>
        <dbReference type="ChEBI" id="CHEBI:18420"/>
    </cofactor>
    <text evidence="1">Binds 2 magnesium ions per monomer.</text>
</comment>
<comment type="pathway">
    <text evidence="1">Amino-acid biosynthesis; L-tryptophan biosynthesis; L-tryptophan from chorismate: step 2/5.</text>
</comment>
<comment type="subunit">
    <text evidence="1">Homodimer.</text>
</comment>
<comment type="similarity">
    <text evidence="1">Belongs to the anthranilate phosphoribosyltransferase family.</text>
</comment>
<accession>Q4FM53</accession>
<organism>
    <name type="scientific">Pelagibacter ubique (strain HTCC1062)</name>
    <dbReference type="NCBI Taxonomy" id="335992"/>
    <lineage>
        <taxon>Bacteria</taxon>
        <taxon>Pseudomonadati</taxon>
        <taxon>Pseudomonadota</taxon>
        <taxon>Alphaproteobacteria</taxon>
        <taxon>Candidatus Pelagibacterales</taxon>
        <taxon>Candidatus Pelagibacteraceae</taxon>
        <taxon>Candidatus Pelagibacter</taxon>
    </lineage>
</organism>